<sequence length="69" mass="7859">MKLSETKSLLKDLRALSVEELTTREAELKKELFDLRFQAAAGRLENTAKLDEVKKTIARVKTVQAELNK</sequence>
<gene>
    <name evidence="1" type="primary">rpmC</name>
    <name type="ordered locus">LACR_2394</name>
</gene>
<organism>
    <name type="scientific">Lactococcus lactis subsp. cremoris (strain SK11)</name>
    <dbReference type="NCBI Taxonomy" id="272622"/>
    <lineage>
        <taxon>Bacteria</taxon>
        <taxon>Bacillati</taxon>
        <taxon>Bacillota</taxon>
        <taxon>Bacilli</taxon>
        <taxon>Lactobacillales</taxon>
        <taxon>Streptococcaceae</taxon>
        <taxon>Lactococcus</taxon>
        <taxon>Lactococcus cremoris subsp. cremoris</taxon>
    </lineage>
</organism>
<reference key="1">
    <citation type="journal article" date="2006" name="Proc. Natl. Acad. Sci. U.S.A.">
        <title>Comparative genomics of the lactic acid bacteria.</title>
        <authorList>
            <person name="Makarova K.S."/>
            <person name="Slesarev A."/>
            <person name="Wolf Y.I."/>
            <person name="Sorokin A."/>
            <person name="Mirkin B."/>
            <person name="Koonin E.V."/>
            <person name="Pavlov A."/>
            <person name="Pavlova N."/>
            <person name="Karamychev V."/>
            <person name="Polouchine N."/>
            <person name="Shakhova V."/>
            <person name="Grigoriev I."/>
            <person name="Lou Y."/>
            <person name="Rohksar D."/>
            <person name="Lucas S."/>
            <person name="Huang K."/>
            <person name="Goodstein D.M."/>
            <person name="Hawkins T."/>
            <person name="Plengvidhya V."/>
            <person name="Welker D."/>
            <person name="Hughes J."/>
            <person name="Goh Y."/>
            <person name="Benson A."/>
            <person name="Baldwin K."/>
            <person name="Lee J.-H."/>
            <person name="Diaz-Muniz I."/>
            <person name="Dosti B."/>
            <person name="Smeianov V."/>
            <person name="Wechter W."/>
            <person name="Barabote R."/>
            <person name="Lorca G."/>
            <person name="Altermann E."/>
            <person name="Barrangou R."/>
            <person name="Ganesan B."/>
            <person name="Xie Y."/>
            <person name="Rawsthorne H."/>
            <person name="Tamir D."/>
            <person name="Parker C."/>
            <person name="Breidt F."/>
            <person name="Broadbent J.R."/>
            <person name="Hutkins R."/>
            <person name="O'Sullivan D."/>
            <person name="Steele J."/>
            <person name="Unlu G."/>
            <person name="Saier M.H. Jr."/>
            <person name="Klaenhammer T."/>
            <person name="Richardson P."/>
            <person name="Kozyavkin S."/>
            <person name="Weimer B.C."/>
            <person name="Mills D.A."/>
        </authorList>
    </citation>
    <scope>NUCLEOTIDE SEQUENCE [LARGE SCALE GENOMIC DNA]</scope>
    <source>
        <strain>SK11</strain>
    </source>
</reference>
<evidence type="ECO:0000255" key="1">
    <source>
        <dbReference type="HAMAP-Rule" id="MF_00374"/>
    </source>
</evidence>
<evidence type="ECO:0000305" key="2"/>
<name>RL29_LACLS</name>
<accession>Q02W32</accession>
<protein>
    <recommendedName>
        <fullName evidence="1">Large ribosomal subunit protein uL29</fullName>
    </recommendedName>
    <alternativeName>
        <fullName evidence="2">50S ribosomal protein L29</fullName>
    </alternativeName>
</protein>
<proteinExistence type="inferred from homology"/>
<feature type="chain" id="PRO_1000007508" description="Large ribosomal subunit protein uL29">
    <location>
        <begin position="1"/>
        <end position="69"/>
    </location>
</feature>
<comment type="similarity">
    <text evidence="1">Belongs to the universal ribosomal protein uL29 family.</text>
</comment>
<dbReference type="EMBL" id="CP000425">
    <property type="protein sequence ID" value="ABJ73840.1"/>
    <property type="molecule type" value="Genomic_DNA"/>
</dbReference>
<dbReference type="RefSeq" id="WP_003129957.1">
    <property type="nucleotide sequence ID" value="NC_008527.1"/>
</dbReference>
<dbReference type="SMR" id="Q02W32"/>
<dbReference type="GeneID" id="89634438"/>
<dbReference type="KEGG" id="llc:LACR_2394"/>
<dbReference type="HOGENOM" id="CLU_158491_5_2_9"/>
<dbReference type="Proteomes" id="UP000000240">
    <property type="component" value="Chromosome"/>
</dbReference>
<dbReference type="GO" id="GO:0022625">
    <property type="term" value="C:cytosolic large ribosomal subunit"/>
    <property type="evidence" value="ECO:0007669"/>
    <property type="project" value="TreeGrafter"/>
</dbReference>
<dbReference type="GO" id="GO:0003735">
    <property type="term" value="F:structural constituent of ribosome"/>
    <property type="evidence" value="ECO:0007669"/>
    <property type="project" value="InterPro"/>
</dbReference>
<dbReference type="GO" id="GO:0006412">
    <property type="term" value="P:translation"/>
    <property type="evidence" value="ECO:0007669"/>
    <property type="project" value="UniProtKB-UniRule"/>
</dbReference>
<dbReference type="CDD" id="cd00427">
    <property type="entry name" value="Ribosomal_L29_HIP"/>
    <property type="match status" value="1"/>
</dbReference>
<dbReference type="FunFam" id="1.10.287.310:FF:000001">
    <property type="entry name" value="50S ribosomal protein L29"/>
    <property type="match status" value="1"/>
</dbReference>
<dbReference type="Gene3D" id="1.10.287.310">
    <property type="match status" value="1"/>
</dbReference>
<dbReference type="HAMAP" id="MF_00374">
    <property type="entry name" value="Ribosomal_uL29"/>
    <property type="match status" value="1"/>
</dbReference>
<dbReference type="InterPro" id="IPR050063">
    <property type="entry name" value="Ribosomal_protein_uL29"/>
</dbReference>
<dbReference type="InterPro" id="IPR001854">
    <property type="entry name" value="Ribosomal_uL29"/>
</dbReference>
<dbReference type="InterPro" id="IPR018254">
    <property type="entry name" value="Ribosomal_uL29_CS"/>
</dbReference>
<dbReference type="InterPro" id="IPR036049">
    <property type="entry name" value="Ribosomal_uL29_sf"/>
</dbReference>
<dbReference type="NCBIfam" id="TIGR00012">
    <property type="entry name" value="L29"/>
    <property type="match status" value="1"/>
</dbReference>
<dbReference type="PANTHER" id="PTHR10916">
    <property type="entry name" value="60S RIBOSOMAL PROTEIN L35/50S RIBOSOMAL PROTEIN L29"/>
    <property type="match status" value="1"/>
</dbReference>
<dbReference type="PANTHER" id="PTHR10916:SF0">
    <property type="entry name" value="LARGE RIBOSOMAL SUBUNIT PROTEIN UL29C"/>
    <property type="match status" value="1"/>
</dbReference>
<dbReference type="Pfam" id="PF00831">
    <property type="entry name" value="Ribosomal_L29"/>
    <property type="match status" value="1"/>
</dbReference>
<dbReference type="SUPFAM" id="SSF46561">
    <property type="entry name" value="Ribosomal protein L29 (L29p)"/>
    <property type="match status" value="1"/>
</dbReference>
<dbReference type="PROSITE" id="PS00579">
    <property type="entry name" value="RIBOSOMAL_L29"/>
    <property type="match status" value="1"/>
</dbReference>
<keyword id="KW-0687">Ribonucleoprotein</keyword>
<keyword id="KW-0689">Ribosomal protein</keyword>